<proteinExistence type="inferred from homology"/>
<protein>
    <recommendedName>
        <fullName evidence="1">Small heat shock protein IbpB</fullName>
    </recommendedName>
    <alternativeName>
        <fullName evidence="1">16 kDa heat shock protein B</fullName>
    </alternativeName>
</protein>
<comment type="function">
    <text evidence="1">Associates with aggregated proteins, together with IbpA, to stabilize and protect them from irreversible denaturation and extensive proteolysis during heat shock and oxidative stress. Aggregated proteins bound to the IbpAB complex are more efficiently refolded and reactivated by the ATP-dependent chaperone systems ClpB and DnaK/DnaJ/GrpE. Its activity is ATP-independent.</text>
</comment>
<comment type="subunit">
    <text evidence="1">Homodimer. Forms homomultimers of about 100-150 subunits at optimal growth temperatures. Conformation changes to oligomers at high temperatures or high ionic concentrations. The decrease in size of the multimers is accompanied by an increase in chaperone activity.</text>
</comment>
<comment type="subcellular location">
    <subcellularLocation>
        <location evidence="1">Cytoplasm</location>
    </subcellularLocation>
</comment>
<comment type="domain">
    <text evidence="1">The N- and C-terminal flexible termini are involved in oligomerization and in the binding of non-native substrate proteins, and are essential for chaperone activity.</text>
</comment>
<comment type="similarity">
    <text evidence="1 2">Belongs to the small heat shock protein (HSP20) family.</text>
</comment>
<reference key="1">
    <citation type="journal article" date="2004" name="Proc. Natl. Acad. Sci. U.S.A.">
        <title>Insights into the evolution of Yersinia pestis through whole-genome comparison with Yersinia pseudotuberculosis.</title>
        <authorList>
            <person name="Chain P.S.G."/>
            <person name="Carniel E."/>
            <person name="Larimer F.W."/>
            <person name="Lamerdin J."/>
            <person name="Stoutland P.O."/>
            <person name="Regala W.M."/>
            <person name="Georgescu A.M."/>
            <person name="Vergez L.M."/>
            <person name="Land M.L."/>
            <person name="Motin V.L."/>
            <person name="Brubaker R.R."/>
            <person name="Fowler J."/>
            <person name="Hinnebusch J."/>
            <person name="Marceau M."/>
            <person name="Medigue C."/>
            <person name="Simonet M."/>
            <person name="Chenal-Francisque V."/>
            <person name="Souza B."/>
            <person name="Dacheux D."/>
            <person name="Elliott J.M."/>
            <person name="Derbise A."/>
            <person name="Hauser L.J."/>
            <person name="Garcia E."/>
        </authorList>
    </citation>
    <scope>NUCLEOTIDE SEQUENCE [LARGE SCALE GENOMIC DNA]</scope>
    <source>
        <strain>IP32953</strain>
    </source>
</reference>
<evidence type="ECO:0000255" key="1">
    <source>
        <dbReference type="HAMAP-Rule" id="MF_02001"/>
    </source>
</evidence>
<evidence type="ECO:0000255" key="2">
    <source>
        <dbReference type="PROSITE-ProRule" id="PRU00285"/>
    </source>
</evidence>
<dbReference type="EMBL" id="BX936398">
    <property type="protein sequence ID" value="CAH23143.1"/>
    <property type="molecule type" value="Genomic_DNA"/>
</dbReference>
<dbReference type="RefSeq" id="WP_002209635.1">
    <property type="nucleotide sequence ID" value="NZ_CP009712.1"/>
</dbReference>
<dbReference type="SMR" id="Q663W9"/>
<dbReference type="GeneID" id="57974634"/>
<dbReference type="KEGG" id="ypo:BZ17_2676"/>
<dbReference type="KEGG" id="yps:YPTB3905"/>
<dbReference type="PATRIC" id="fig|273123.14.peg.2805"/>
<dbReference type="Proteomes" id="UP000001011">
    <property type="component" value="Chromosome"/>
</dbReference>
<dbReference type="GO" id="GO:0005737">
    <property type="term" value="C:cytoplasm"/>
    <property type="evidence" value="ECO:0007669"/>
    <property type="project" value="UniProtKB-SubCell"/>
</dbReference>
<dbReference type="GO" id="GO:0050821">
    <property type="term" value="P:protein stabilization"/>
    <property type="evidence" value="ECO:0007669"/>
    <property type="project" value="UniProtKB-UniRule"/>
</dbReference>
<dbReference type="CDD" id="cd06470">
    <property type="entry name" value="ACD_IbpA-B_like"/>
    <property type="match status" value="1"/>
</dbReference>
<dbReference type="Gene3D" id="2.60.40.790">
    <property type="match status" value="1"/>
</dbReference>
<dbReference type="HAMAP" id="MF_02001">
    <property type="entry name" value="HSP20_IbpB"/>
    <property type="match status" value="1"/>
</dbReference>
<dbReference type="InterPro" id="IPR002068">
    <property type="entry name" value="A-crystallin/Hsp20_dom"/>
</dbReference>
<dbReference type="InterPro" id="IPR037913">
    <property type="entry name" value="ACD_IbpA/B"/>
</dbReference>
<dbReference type="InterPro" id="IPR008978">
    <property type="entry name" value="HSP20-like_chaperone"/>
</dbReference>
<dbReference type="InterPro" id="IPR022848">
    <property type="entry name" value="HSP20_IbpB"/>
</dbReference>
<dbReference type="NCBIfam" id="NF008618">
    <property type="entry name" value="PRK11597.1"/>
    <property type="match status" value="1"/>
</dbReference>
<dbReference type="PANTHER" id="PTHR47062">
    <property type="match status" value="1"/>
</dbReference>
<dbReference type="PANTHER" id="PTHR47062:SF2">
    <property type="entry name" value="SMALL HEAT SHOCK PROTEIN IBPB"/>
    <property type="match status" value="1"/>
</dbReference>
<dbReference type="Pfam" id="PF00011">
    <property type="entry name" value="HSP20"/>
    <property type="match status" value="1"/>
</dbReference>
<dbReference type="SUPFAM" id="SSF49764">
    <property type="entry name" value="HSP20-like chaperones"/>
    <property type="match status" value="1"/>
</dbReference>
<dbReference type="PROSITE" id="PS01031">
    <property type="entry name" value="SHSP"/>
    <property type="match status" value="1"/>
</dbReference>
<sequence length="154" mass="17489">MRNYDLSPLLRQWIGFDKLASTMQGGQEPQGFPPYNIEKTDDNHYRISLALAGFKQSELDIEVEGPRLTVRGKPTPVEKQVEYLHQGLVRKEFSLTFTLAEHLNVDNAQFENGLLHIDLLRQVPEALQPQRIAIGSATPQERQVLESPEAPDQQ</sequence>
<keyword id="KW-0143">Chaperone</keyword>
<keyword id="KW-0963">Cytoplasm</keyword>
<keyword id="KW-0346">Stress response</keyword>
<accession>Q663W9</accession>
<gene>
    <name evidence="1" type="primary">ibpB</name>
    <name type="ordered locus">YPTB3905</name>
</gene>
<feature type="chain" id="PRO_0000126038" description="Small heat shock protein IbpB">
    <location>
        <begin position="1"/>
        <end position="154"/>
    </location>
</feature>
<feature type="domain" description="sHSP" evidence="2">
    <location>
        <begin position="26"/>
        <end position="137"/>
    </location>
</feature>
<name>IBPB_YERPS</name>
<organism>
    <name type="scientific">Yersinia pseudotuberculosis serotype I (strain IP32953)</name>
    <dbReference type="NCBI Taxonomy" id="273123"/>
    <lineage>
        <taxon>Bacteria</taxon>
        <taxon>Pseudomonadati</taxon>
        <taxon>Pseudomonadota</taxon>
        <taxon>Gammaproteobacteria</taxon>
        <taxon>Enterobacterales</taxon>
        <taxon>Yersiniaceae</taxon>
        <taxon>Yersinia</taxon>
    </lineage>
</organism>